<keyword id="KW-1185">Reference proteome</keyword>
<dbReference type="EMBL" id="AF303741">
    <property type="protein sequence ID" value="AAB94464.1"/>
    <property type="molecule type" value="Genomic_DNA"/>
</dbReference>
<dbReference type="PIR" id="T03090">
    <property type="entry name" value="T03090"/>
</dbReference>
<dbReference type="RefSeq" id="NP_149612.1">
    <property type="nucleotide sequence ID" value="NC_003038.1"/>
</dbReference>
<dbReference type="KEGG" id="vg:1732999"/>
<dbReference type="OrthoDB" id="30115at10239"/>
<dbReference type="Proteomes" id="UP000001359">
    <property type="component" value="Genome"/>
</dbReference>
<dbReference type="Gene3D" id="1.10.357.40">
    <property type="entry name" value="YbiA-like"/>
    <property type="match status" value="1"/>
</dbReference>
<dbReference type="InterPro" id="IPR037238">
    <property type="entry name" value="YbiA-like_sf"/>
</dbReference>
<feature type="chain" id="PRO_0000378012" description="Uncharacterized protein 149L">
    <location>
        <begin position="1"/>
        <end position="666"/>
    </location>
</feature>
<gene>
    <name type="ORF">IIV6-149L</name>
</gene>
<accession>O55753</accession>
<organism>
    <name type="scientific">Invertebrate iridescent virus 6</name>
    <name type="common">IIV-6</name>
    <name type="synonym">Chilo iridescent virus</name>
    <dbReference type="NCBI Taxonomy" id="176652"/>
    <lineage>
        <taxon>Viruses</taxon>
        <taxon>Varidnaviria</taxon>
        <taxon>Bamfordvirae</taxon>
        <taxon>Nucleocytoviricota</taxon>
        <taxon>Megaviricetes</taxon>
        <taxon>Pimascovirales</taxon>
        <taxon>Iridoviridae</taxon>
        <taxon>Betairidovirinae</taxon>
        <taxon>Iridovirus</taxon>
    </lineage>
</organism>
<sequence>MKETIFEIFVDDLMDSSYDEEDFERGDAGIDDKKAFMKNQFRTISLAEKNSLVQRTMKLYEAGALNKRVMDKATLVEQNTYIPSHKEIDKYENDTVPIPVAKPKNPHVDEPAFNVNEIMGRADKYIGTFNLGMVWVYPYLDDPPIKFGTRTLEHKFEYDLLSPANDSTMLNIENKLYPSISHYLIVRVAQTMPGFENVDKAYGVISDGPNRFFSVADSESRLMNLEQTVFSKEKTFLLQKAIRNKFDQRKFKDILIATGDKVLVYAPLKLTDEARRLKYQGLAKPINIVTESNAYRKETTNFLEKIRPTILPEDVIFSNNNAFKTSLEYDEFMEMFMVEKVKDISFTIKCVQVFCKHKDLPFSLTKCFVKKVLESFYGECTPVNYISGSAKKQYPYRFEEALSAQFQIRSRKETSFSMSTKTANLIFNKILETLFNLENVMKNGELPHIGGQNEIPMYATLFKIALMDSQWLLSKRNNKDLKFDTKSKNNNNIISAIINVISILHMDLSDNKKVGNCIYDSIDNIVDDVDIKIATSILTGKIQPLEEITVAKSKGSLRAQIIAEEEIRFGEEIEAEFNDEEVVEEGDVIEEEELDEEGGEEEEGIDYADELPEFDEEAYYEGVVRTITGHFESLGLDVENGIEDKIRKEAQKIEKIGNRLKINFYA</sequence>
<reference key="1">
    <citation type="journal article" date="2001" name="Virology">
        <title>Analysis of the first complete DNA sequence of an invertebrate iridovirus: coding strategy of the genome of Chilo iridescent virus.</title>
        <authorList>
            <person name="Jakob N.J."/>
            <person name="Mueller K."/>
            <person name="Bahr U."/>
            <person name="Darai G."/>
        </authorList>
    </citation>
    <scope>NUCLEOTIDE SEQUENCE [LARGE SCALE GENOMIC DNA]</scope>
</reference>
<reference key="2">
    <citation type="journal article" date="2007" name="Virol. J.">
        <title>Comparative genomic analysis of the family Iridoviridae: re-annotating and defining the core set of iridovirus genes.</title>
        <authorList>
            <person name="Eaton H.E."/>
            <person name="Metcalf J."/>
            <person name="Penny E."/>
            <person name="Tcherepanov V."/>
            <person name="Upton C."/>
            <person name="Brunetti C.R."/>
        </authorList>
    </citation>
    <scope>GENOME REANNOTATION</scope>
</reference>
<protein>
    <recommendedName>
        <fullName>Uncharacterized protein 149L</fullName>
    </recommendedName>
</protein>
<proteinExistence type="predicted"/>
<organismHost>
    <name type="scientific">Acheta domesticus</name>
    <name type="common">House cricket</name>
    <dbReference type="NCBI Taxonomy" id="6997"/>
</organismHost>
<organismHost>
    <name type="scientific">Chilo suppressalis</name>
    <name type="common">Asiatic rice borer moth</name>
    <dbReference type="NCBI Taxonomy" id="168631"/>
</organismHost>
<organismHost>
    <name type="scientific">Gryllus bimaculatus</name>
    <name type="common">Two-spotted cricket</name>
    <dbReference type="NCBI Taxonomy" id="6999"/>
</organismHost>
<organismHost>
    <name type="scientific">Gryllus campestris</name>
    <dbReference type="NCBI Taxonomy" id="58607"/>
</organismHost>
<organismHost>
    <name type="scientific">Spodoptera frugiperda</name>
    <name type="common">Fall armyworm</name>
    <dbReference type="NCBI Taxonomy" id="7108"/>
</organismHost>
<name>149L_IIV6</name>